<name>RL37A_METST</name>
<accession>Q2NEX3</accession>
<protein>
    <recommendedName>
        <fullName evidence="1">Large ribosomal subunit protein eL43</fullName>
    </recommendedName>
    <alternativeName>
        <fullName evidence="3">50S ribosomal protein L37Ae</fullName>
    </alternativeName>
    <alternativeName>
        <fullName evidence="1">Ribosomal protein L43e</fullName>
    </alternativeName>
</protein>
<organism>
    <name type="scientific">Methanosphaera stadtmanae (strain ATCC 43021 / DSM 3091 / JCM 11832 / MCB-3)</name>
    <dbReference type="NCBI Taxonomy" id="339860"/>
    <lineage>
        <taxon>Archaea</taxon>
        <taxon>Methanobacteriati</taxon>
        <taxon>Methanobacteriota</taxon>
        <taxon>Methanomada group</taxon>
        <taxon>Methanobacteria</taxon>
        <taxon>Methanobacteriales</taxon>
        <taxon>Methanobacteriaceae</taxon>
        <taxon>Methanosphaera</taxon>
    </lineage>
</organism>
<proteinExistence type="inferred from homology"/>
<feature type="chain" id="PRO_1000005039" description="Large ribosomal subunit protein eL43">
    <location>
        <begin position="1"/>
        <end position="89"/>
    </location>
</feature>
<feature type="zinc finger region" description="C4-type" evidence="1">
    <location>
        <begin position="38"/>
        <end position="59"/>
    </location>
</feature>
<feature type="region of interest" description="Disordered" evidence="2">
    <location>
        <begin position="1"/>
        <end position="28"/>
    </location>
</feature>
<evidence type="ECO:0000255" key="1">
    <source>
        <dbReference type="HAMAP-Rule" id="MF_00327"/>
    </source>
</evidence>
<evidence type="ECO:0000256" key="2">
    <source>
        <dbReference type="SAM" id="MobiDB-lite"/>
    </source>
</evidence>
<evidence type="ECO:0000305" key="3"/>
<sequence length="89" mass="9801">MVKKSKVGSTGRFGARYGRKAKRTVKDIEDKMHAKHVCPKCDRPGVKRTHAGIWKCRKCGAVFTGGAYIPTTPMGKVAKRNIKRITGGE</sequence>
<comment type="cofactor">
    <cofactor evidence="1">
        <name>Zn(2+)</name>
        <dbReference type="ChEBI" id="CHEBI:29105"/>
    </cofactor>
    <text evidence="1">Binds 1 zinc ion per subunit.</text>
</comment>
<comment type="similarity">
    <text evidence="1">Belongs to the eukaryotic ribosomal protein eL43 family.</text>
</comment>
<reference key="1">
    <citation type="journal article" date="2006" name="J. Bacteriol.">
        <title>The genome sequence of Methanosphaera stadtmanae reveals why this human intestinal archaeon is restricted to methanol and H2 for methane formation and ATP synthesis.</title>
        <authorList>
            <person name="Fricke W.F."/>
            <person name="Seedorf H."/>
            <person name="Henne A."/>
            <person name="Kruer M."/>
            <person name="Liesegang H."/>
            <person name="Hedderich R."/>
            <person name="Gottschalk G."/>
            <person name="Thauer R.K."/>
        </authorList>
    </citation>
    <scope>NUCLEOTIDE SEQUENCE [LARGE SCALE GENOMIC DNA]</scope>
    <source>
        <strain>ATCC 43021 / DSM 3091 / JCM 11832 / MCB-3</strain>
    </source>
</reference>
<keyword id="KW-0479">Metal-binding</keyword>
<keyword id="KW-1185">Reference proteome</keyword>
<keyword id="KW-0687">Ribonucleoprotein</keyword>
<keyword id="KW-0689">Ribosomal protein</keyword>
<keyword id="KW-0694">RNA-binding</keyword>
<keyword id="KW-0862">Zinc</keyword>
<keyword id="KW-0863">Zinc-finger</keyword>
<gene>
    <name evidence="1" type="primary">rpl37ae</name>
    <name type="ordered locus">Msp_1253</name>
</gene>
<dbReference type="EMBL" id="CP000102">
    <property type="protein sequence ID" value="ABC57630.1"/>
    <property type="molecule type" value="Genomic_DNA"/>
</dbReference>
<dbReference type="SMR" id="Q2NEX3"/>
<dbReference type="STRING" id="339860.Msp_1253"/>
<dbReference type="KEGG" id="mst:Msp_1253"/>
<dbReference type="eggNOG" id="arCOG04208">
    <property type="taxonomic scope" value="Archaea"/>
</dbReference>
<dbReference type="HOGENOM" id="CLU_141199_2_0_2"/>
<dbReference type="OrthoDB" id="372011at2157"/>
<dbReference type="Proteomes" id="UP000001931">
    <property type="component" value="Chromosome"/>
</dbReference>
<dbReference type="GO" id="GO:1990904">
    <property type="term" value="C:ribonucleoprotein complex"/>
    <property type="evidence" value="ECO:0007669"/>
    <property type="project" value="UniProtKB-KW"/>
</dbReference>
<dbReference type="GO" id="GO:0005840">
    <property type="term" value="C:ribosome"/>
    <property type="evidence" value="ECO:0007669"/>
    <property type="project" value="UniProtKB-KW"/>
</dbReference>
<dbReference type="GO" id="GO:0070180">
    <property type="term" value="F:large ribosomal subunit rRNA binding"/>
    <property type="evidence" value="ECO:0007669"/>
    <property type="project" value="UniProtKB-UniRule"/>
</dbReference>
<dbReference type="GO" id="GO:0003735">
    <property type="term" value="F:structural constituent of ribosome"/>
    <property type="evidence" value="ECO:0007669"/>
    <property type="project" value="InterPro"/>
</dbReference>
<dbReference type="GO" id="GO:0008270">
    <property type="term" value="F:zinc ion binding"/>
    <property type="evidence" value="ECO:0007669"/>
    <property type="project" value="UniProtKB-UniRule"/>
</dbReference>
<dbReference type="GO" id="GO:0006412">
    <property type="term" value="P:translation"/>
    <property type="evidence" value="ECO:0007669"/>
    <property type="project" value="UniProtKB-UniRule"/>
</dbReference>
<dbReference type="Gene3D" id="2.20.25.30">
    <property type="match status" value="1"/>
</dbReference>
<dbReference type="HAMAP" id="MF_00327">
    <property type="entry name" value="Ribosomal_eL43"/>
    <property type="match status" value="1"/>
</dbReference>
<dbReference type="InterPro" id="IPR011331">
    <property type="entry name" value="Ribosomal_eL37/eL43"/>
</dbReference>
<dbReference type="InterPro" id="IPR002674">
    <property type="entry name" value="Ribosomal_eL43"/>
</dbReference>
<dbReference type="InterPro" id="IPR050522">
    <property type="entry name" value="Ribosomal_protein_eL43"/>
</dbReference>
<dbReference type="InterPro" id="IPR011332">
    <property type="entry name" value="Ribosomal_zn-bd"/>
</dbReference>
<dbReference type="NCBIfam" id="TIGR00280">
    <property type="entry name" value="eL43_euk_arch"/>
    <property type="match status" value="1"/>
</dbReference>
<dbReference type="NCBIfam" id="NF003058">
    <property type="entry name" value="PRK03976.1"/>
    <property type="match status" value="1"/>
</dbReference>
<dbReference type="PANTHER" id="PTHR48129">
    <property type="entry name" value="60S RIBOSOMAL PROTEIN L37A"/>
    <property type="match status" value="1"/>
</dbReference>
<dbReference type="PANTHER" id="PTHR48129:SF1">
    <property type="entry name" value="LARGE RIBOSOMAL SUBUNIT PROTEIN EL43"/>
    <property type="match status" value="1"/>
</dbReference>
<dbReference type="Pfam" id="PF01780">
    <property type="entry name" value="Ribosomal_L37ae"/>
    <property type="match status" value="1"/>
</dbReference>
<dbReference type="SUPFAM" id="SSF57829">
    <property type="entry name" value="Zn-binding ribosomal proteins"/>
    <property type="match status" value="1"/>
</dbReference>